<feature type="chain" id="PRO_0000047109" description="Early growth response protein 1">
    <location>
        <begin position="1"/>
        <end position="543"/>
    </location>
</feature>
<feature type="zinc finger region" description="C2H2-type 1" evidence="2 6 7 11 12 13 14">
    <location>
        <begin position="338"/>
        <end position="362"/>
    </location>
</feature>
<feature type="zinc finger region" description="C2H2-type 2" evidence="2 6 7 11 12 13 14">
    <location>
        <begin position="368"/>
        <end position="390"/>
    </location>
</feature>
<feature type="zinc finger region" description="C2H2-type 3" evidence="2 6 7 11 12 13 14">
    <location>
        <begin position="396"/>
        <end position="418"/>
    </location>
</feature>
<feature type="region of interest" description="Disordered" evidence="3">
    <location>
        <begin position="1"/>
        <end position="105"/>
    </location>
</feature>
<feature type="region of interest" description="Disordered" evidence="3">
    <location>
        <begin position="165"/>
        <end position="213"/>
    </location>
</feature>
<feature type="region of interest" description="Disordered" evidence="3">
    <location>
        <begin position="264"/>
        <end position="284"/>
    </location>
</feature>
<feature type="region of interest" description="Disordered" evidence="3">
    <location>
        <begin position="318"/>
        <end position="339"/>
    </location>
</feature>
<feature type="region of interest" description="Disordered" evidence="3">
    <location>
        <begin position="409"/>
        <end position="487"/>
    </location>
</feature>
<feature type="compositionally biased region" description="Low complexity" evidence="3">
    <location>
        <begin position="57"/>
        <end position="66"/>
    </location>
</feature>
<feature type="compositionally biased region" description="Gly residues" evidence="3">
    <location>
        <begin position="67"/>
        <end position="77"/>
    </location>
</feature>
<feature type="compositionally biased region" description="Low complexity" evidence="3">
    <location>
        <begin position="167"/>
        <end position="189"/>
    </location>
</feature>
<feature type="compositionally biased region" description="Basic residues" evidence="3">
    <location>
        <begin position="413"/>
        <end position="423"/>
    </location>
</feature>
<feature type="compositionally biased region" description="Low complexity" evidence="3">
    <location>
        <begin position="429"/>
        <end position="486"/>
    </location>
</feature>
<feature type="site" description="Interaction with DNA" evidence="6 11">
    <location>
        <position position="336"/>
    </location>
</feature>
<feature type="site" description="Interaction with DNA" evidence="1">
    <location>
        <position position="347"/>
    </location>
</feature>
<feature type="site" description="Interaction with DNA" evidence="1">
    <location>
        <position position="351"/>
    </location>
</feature>
<feature type="site" description="Interaction with DNA" evidence="6 11">
    <location>
        <position position="357"/>
    </location>
</feature>
<feature type="site" description="Interaction with DNA" evidence="1">
    <location>
        <position position="375"/>
    </location>
</feature>
<feature type="site" description="Interaction with DNA" evidence="6 11">
    <location>
        <position position="379"/>
    </location>
</feature>
<feature type="site" description="Interaction with DNA" evidence="7 14">
    <location>
        <position position="403"/>
    </location>
</feature>
<feature type="site" description="Interaction with DNA" evidence="6 11">
    <location>
        <position position="407"/>
    </location>
</feature>
<feature type="site" description="Interaction with DNA" evidence="6 7 11 14">
    <location>
        <position position="413"/>
    </location>
</feature>
<feature type="cross-link" description="Glycyl lysine isopeptide (Lys-Gly) (interchain with G-Cter in SUMO2)" evidence="15">
    <location>
        <position position="305"/>
    </location>
</feature>
<feature type="sequence variant" id="VAR_052712" description="In dbSNP:rs13181973.">
    <original>T</original>
    <variation>I</variation>
    <location>
        <position position="28"/>
    </location>
</feature>
<feature type="sequence variant" id="VAR_029330" description="In dbSNP:rs28365166.">
    <original>N</original>
    <variation>K</variation>
    <location>
        <position position="144"/>
    </location>
</feature>
<feature type="sequence variant" id="VAR_029331" description="In dbSNP:rs28365164.">
    <original>S</original>
    <variation>R</variation>
    <location>
        <position position="145"/>
    </location>
</feature>
<feature type="sequence variant" id="VAR_029332" description="In dbSNP:rs28365165.">
    <original>E</original>
    <variation>D</variation>
    <location>
        <position position="219"/>
    </location>
</feature>
<feature type="strand" evidence="16">
    <location>
        <begin position="348"/>
        <end position="351"/>
    </location>
</feature>
<feature type="helix" evidence="16">
    <location>
        <begin position="352"/>
        <end position="363"/>
    </location>
</feature>
<feature type="turn" evidence="16">
    <location>
        <begin position="371"/>
        <end position="373"/>
    </location>
</feature>
<feature type="strand" evidence="16">
    <location>
        <begin position="376"/>
        <end position="378"/>
    </location>
</feature>
<feature type="helix" evidence="16">
    <location>
        <begin position="380"/>
        <end position="391"/>
    </location>
</feature>
<feature type="turn" evidence="16">
    <location>
        <begin position="399"/>
        <end position="401"/>
    </location>
</feature>
<feature type="strand" evidence="16">
    <location>
        <begin position="404"/>
        <end position="407"/>
    </location>
</feature>
<feature type="helix" evidence="16">
    <location>
        <begin position="408"/>
        <end position="415"/>
    </location>
</feature>
<feature type="helix" evidence="16">
    <location>
        <begin position="416"/>
        <end position="418"/>
    </location>
</feature>
<dbReference type="EMBL" id="X52541">
    <property type="protein sequence ID" value="CAA36777.1"/>
    <property type="molecule type" value="mRNA"/>
</dbReference>
<dbReference type="EMBL" id="M62829">
    <property type="protein sequence ID" value="AAA35815.1"/>
    <property type="molecule type" value="mRNA"/>
</dbReference>
<dbReference type="EMBL" id="M80583">
    <property type="status" value="NOT_ANNOTATED_CDS"/>
    <property type="molecule type" value="mRNA"/>
</dbReference>
<dbReference type="EMBL" id="BC073983">
    <property type="protein sequence ID" value="AAH73983.1"/>
    <property type="molecule type" value="mRNA"/>
</dbReference>
<dbReference type="CCDS" id="CCDS4206.1"/>
<dbReference type="PIR" id="A41211">
    <property type="entry name" value="A41211"/>
</dbReference>
<dbReference type="RefSeq" id="NP_001955.1">
    <property type="nucleotide sequence ID" value="NM_001964.3"/>
</dbReference>
<dbReference type="PDB" id="4R2A">
    <property type="method" value="X-ray"/>
    <property type="resolution" value="1.59 A"/>
    <property type="chains" value="A=335-423"/>
</dbReference>
<dbReference type="PDB" id="4R2C">
    <property type="method" value="X-ray"/>
    <property type="resolution" value="1.89 A"/>
    <property type="chains" value="A=335-423"/>
</dbReference>
<dbReference type="PDB" id="4R2D">
    <property type="method" value="X-ray"/>
    <property type="resolution" value="2.09 A"/>
    <property type="chains" value="A=335-423"/>
</dbReference>
<dbReference type="PDB" id="4X9J">
    <property type="method" value="X-ray"/>
    <property type="resolution" value="1.41 A"/>
    <property type="chains" value="A=335-423"/>
</dbReference>
<dbReference type="PDB" id="5N14">
    <property type="method" value="NMR"/>
    <property type="chains" value="A=395-408"/>
</dbReference>
<dbReference type="PDBsum" id="4R2A"/>
<dbReference type="PDBsum" id="4R2C"/>
<dbReference type="PDBsum" id="4R2D"/>
<dbReference type="PDBsum" id="4X9J"/>
<dbReference type="PDBsum" id="5N14"/>
<dbReference type="BMRB" id="P18146"/>
<dbReference type="SMR" id="P18146"/>
<dbReference type="BioGRID" id="108278">
    <property type="interactions" value="55"/>
</dbReference>
<dbReference type="CORUM" id="P18146"/>
<dbReference type="FunCoup" id="P18146">
    <property type="interactions" value="4794"/>
</dbReference>
<dbReference type="IntAct" id="P18146">
    <property type="interactions" value="30"/>
</dbReference>
<dbReference type="MINT" id="P18146"/>
<dbReference type="STRING" id="9606.ENSP00000239938"/>
<dbReference type="ChEMBL" id="CHEMBL3616355"/>
<dbReference type="GlyConnect" id="2852">
    <property type="glycosylation" value="1 O-GlcNAc glycan (1 site)"/>
</dbReference>
<dbReference type="GlyCosmos" id="P18146">
    <property type="glycosylation" value="5 sites, 2 glycans"/>
</dbReference>
<dbReference type="GlyGen" id="P18146">
    <property type="glycosylation" value="12 sites, 2 O-linked glycans (12 sites)"/>
</dbReference>
<dbReference type="iPTMnet" id="P18146"/>
<dbReference type="PhosphoSitePlus" id="P18146"/>
<dbReference type="BioMuta" id="EGR1"/>
<dbReference type="DMDM" id="119242"/>
<dbReference type="jPOST" id="P18146"/>
<dbReference type="MassIVE" id="P18146"/>
<dbReference type="PaxDb" id="9606-ENSP00000239938"/>
<dbReference type="PeptideAtlas" id="P18146"/>
<dbReference type="ProteomicsDB" id="53552"/>
<dbReference type="Antibodypedia" id="14988">
    <property type="antibodies" value="546 antibodies from 42 providers"/>
</dbReference>
<dbReference type="DNASU" id="1958"/>
<dbReference type="Ensembl" id="ENST00000239938.5">
    <property type="protein sequence ID" value="ENSP00000239938.4"/>
    <property type="gene ID" value="ENSG00000120738.8"/>
</dbReference>
<dbReference type="GeneID" id="1958"/>
<dbReference type="KEGG" id="hsa:1958"/>
<dbReference type="MANE-Select" id="ENST00000239938.5">
    <property type="protein sequence ID" value="ENSP00000239938.4"/>
    <property type="RefSeq nucleotide sequence ID" value="NM_001964.3"/>
    <property type="RefSeq protein sequence ID" value="NP_001955.1"/>
</dbReference>
<dbReference type="AGR" id="HGNC:3238"/>
<dbReference type="CTD" id="1958"/>
<dbReference type="DisGeNET" id="1958"/>
<dbReference type="GeneCards" id="EGR1"/>
<dbReference type="HGNC" id="HGNC:3238">
    <property type="gene designation" value="EGR1"/>
</dbReference>
<dbReference type="HPA" id="ENSG00000120738">
    <property type="expression patterns" value="Low tissue specificity"/>
</dbReference>
<dbReference type="MalaCards" id="EGR1"/>
<dbReference type="MIM" id="128990">
    <property type="type" value="gene"/>
</dbReference>
<dbReference type="neXtProt" id="NX_P18146"/>
<dbReference type="OpenTargets" id="ENSG00000120738"/>
<dbReference type="PharmGKB" id="PA27673"/>
<dbReference type="VEuPathDB" id="HostDB:ENSG00000120738"/>
<dbReference type="eggNOG" id="KOG1721">
    <property type="taxonomic scope" value="Eukaryota"/>
</dbReference>
<dbReference type="GeneTree" id="ENSGT00940000160184"/>
<dbReference type="HOGENOM" id="CLU_043235_2_0_1"/>
<dbReference type="InParanoid" id="P18146"/>
<dbReference type="OMA" id="NFQVPMI"/>
<dbReference type="OrthoDB" id="10018191at2759"/>
<dbReference type="PAN-GO" id="P18146">
    <property type="GO annotations" value="3 GO annotations based on evolutionary models"/>
</dbReference>
<dbReference type="PhylomeDB" id="P18146"/>
<dbReference type="TreeFam" id="TF318980"/>
<dbReference type="PathwayCommons" id="P18146"/>
<dbReference type="Reactome" id="R-HSA-8943724">
    <property type="pathway name" value="Regulation of PTEN gene transcription"/>
</dbReference>
<dbReference type="Reactome" id="R-HSA-9031628">
    <property type="pathway name" value="NGF-stimulated transcription"/>
</dbReference>
<dbReference type="Reactome" id="R-HSA-909733">
    <property type="pathway name" value="Interferon alpha/beta signaling"/>
</dbReference>
<dbReference type="SignaLink" id="P18146"/>
<dbReference type="SIGNOR" id="P18146"/>
<dbReference type="BioGRID-ORCS" id="1958">
    <property type="hits" value="24 hits in 1177 CRISPR screens"/>
</dbReference>
<dbReference type="ChiTaRS" id="EGR1">
    <property type="organism name" value="human"/>
</dbReference>
<dbReference type="EvolutionaryTrace" id="P18146"/>
<dbReference type="GeneWiki" id="EGR1"/>
<dbReference type="GenomeRNAi" id="1958"/>
<dbReference type="Pharos" id="P18146">
    <property type="development level" value="Tbio"/>
</dbReference>
<dbReference type="PRO" id="PR:P18146"/>
<dbReference type="Proteomes" id="UP000005640">
    <property type="component" value="Chromosome 5"/>
</dbReference>
<dbReference type="RNAct" id="P18146">
    <property type="molecule type" value="protein"/>
</dbReference>
<dbReference type="Bgee" id="ENSG00000120738">
    <property type="expression patterns" value="Expressed in mucosa of stomach and 210 other cell types or tissues"/>
</dbReference>
<dbReference type="ExpressionAtlas" id="P18146">
    <property type="expression patterns" value="baseline and differential"/>
</dbReference>
<dbReference type="GO" id="GO:0000785">
    <property type="term" value="C:chromatin"/>
    <property type="evidence" value="ECO:0000314"/>
    <property type="project" value="ARUK-UCL"/>
</dbReference>
<dbReference type="GO" id="GO:0005737">
    <property type="term" value="C:cytoplasm"/>
    <property type="evidence" value="ECO:0000314"/>
    <property type="project" value="UniProtKB"/>
</dbReference>
<dbReference type="GO" id="GO:0005654">
    <property type="term" value="C:nucleoplasm"/>
    <property type="evidence" value="ECO:0000314"/>
    <property type="project" value="HPA"/>
</dbReference>
<dbReference type="GO" id="GO:0005634">
    <property type="term" value="C:nucleus"/>
    <property type="evidence" value="ECO:0000314"/>
    <property type="project" value="UniProtKB"/>
</dbReference>
<dbReference type="GO" id="GO:0003677">
    <property type="term" value="F:DNA binding"/>
    <property type="evidence" value="ECO:0000314"/>
    <property type="project" value="UniProtKB"/>
</dbReference>
<dbReference type="GO" id="GO:0001228">
    <property type="term" value="F:DNA-binding transcription activator activity, RNA polymerase II-specific"/>
    <property type="evidence" value="ECO:0000314"/>
    <property type="project" value="ARUK-UCL"/>
</dbReference>
<dbReference type="GO" id="GO:0003700">
    <property type="term" value="F:DNA-binding transcription factor activity"/>
    <property type="evidence" value="ECO:0000314"/>
    <property type="project" value="UniProtKB"/>
</dbReference>
<dbReference type="GO" id="GO:0000981">
    <property type="term" value="F:DNA-binding transcription factor activity, RNA polymerase II-specific"/>
    <property type="evidence" value="ECO:0000247"/>
    <property type="project" value="NTNU_SB"/>
</dbReference>
<dbReference type="GO" id="GO:0010385">
    <property type="term" value="F:double-stranded methylated DNA binding"/>
    <property type="evidence" value="ECO:0000314"/>
    <property type="project" value="UniProtKB"/>
</dbReference>
<dbReference type="GO" id="GO:0044729">
    <property type="term" value="F:hemi-methylated DNA-binding"/>
    <property type="evidence" value="ECO:0000314"/>
    <property type="project" value="UniProtKB"/>
</dbReference>
<dbReference type="GO" id="GO:0035035">
    <property type="term" value="F:histone acetyltransferase binding"/>
    <property type="evidence" value="ECO:0000353"/>
    <property type="project" value="BHF-UCL"/>
</dbReference>
<dbReference type="GO" id="GO:1990841">
    <property type="term" value="F:promoter-specific chromatin binding"/>
    <property type="evidence" value="ECO:0000314"/>
    <property type="project" value="UniProtKB"/>
</dbReference>
<dbReference type="GO" id="GO:0000978">
    <property type="term" value="F:RNA polymerase II cis-regulatory region sequence-specific DNA binding"/>
    <property type="evidence" value="ECO:0000314"/>
    <property type="project" value="ARUK-UCL"/>
</dbReference>
<dbReference type="GO" id="GO:0000977">
    <property type="term" value="F:RNA polymerase II transcription regulatory region sequence-specific DNA binding"/>
    <property type="evidence" value="ECO:0000314"/>
    <property type="project" value="UniProtKB"/>
</dbReference>
<dbReference type="GO" id="GO:0043565">
    <property type="term" value="F:sequence-specific DNA binding"/>
    <property type="evidence" value="ECO:0000314"/>
    <property type="project" value="UniProtKB"/>
</dbReference>
<dbReference type="GO" id="GO:1990837">
    <property type="term" value="F:sequence-specific double-stranded DNA binding"/>
    <property type="evidence" value="ECO:0000314"/>
    <property type="project" value="ARUK-UCL"/>
</dbReference>
<dbReference type="GO" id="GO:0000976">
    <property type="term" value="F:transcription cis-regulatory region binding"/>
    <property type="evidence" value="ECO:0000314"/>
    <property type="project" value="UniProtKB"/>
</dbReference>
<dbReference type="GO" id="GO:0008270">
    <property type="term" value="F:zinc ion binding"/>
    <property type="evidence" value="ECO:0000314"/>
    <property type="project" value="UniProtKB"/>
</dbReference>
<dbReference type="GO" id="GO:0030509">
    <property type="term" value="P:BMP signaling pathway"/>
    <property type="evidence" value="ECO:0007669"/>
    <property type="project" value="Ensembl"/>
</dbReference>
<dbReference type="GO" id="GO:0071480">
    <property type="term" value="P:cellular response to gamma radiation"/>
    <property type="evidence" value="ECO:0007669"/>
    <property type="project" value="Ensembl"/>
</dbReference>
<dbReference type="GO" id="GO:0071504">
    <property type="term" value="P:cellular response to heparin"/>
    <property type="evidence" value="ECO:0000250"/>
    <property type="project" value="UniProtKB"/>
</dbReference>
<dbReference type="GO" id="GO:0098759">
    <property type="term" value="P:cellular response to interleukin-8"/>
    <property type="evidence" value="ECO:0000314"/>
    <property type="project" value="UniProtKB"/>
</dbReference>
<dbReference type="GO" id="GO:0071506">
    <property type="term" value="P:cellular response to mycophenolic acid"/>
    <property type="evidence" value="ECO:0000250"/>
    <property type="project" value="UniProtKB"/>
</dbReference>
<dbReference type="GO" id="GO:0032922">
    <property type="term" value="P:circadian regulation of gene expression"/>
    <property type="evidence" value="ECO:0000250"/>
    <property type="project" value="UniProtKB"/>
</dbReference>
<dbReference type="GO" id="GO:0060086">
    <property type="term" value="P:circadian temperature homeostasis"/>
    <property type="evidence" value="ECO:0000250"/>
    <property type="project" value="UniProtKB"/>
</dbReference>
<dbReference type="GO" id="GO:0044849">
    <property type="term" value="P:estrous cycle"/>
    <property type="evidence" value="ECO:0000250"/>
    <property type="project" value="UniProtKB"/>
</dbReference>
<dbReference type="GO" id="GO:0072110">
    <property type="term" value="P:glomerular mesangial cell proliferation"/>
    <property type="evidence" value="ECO:0000250"/>
    <property type="project" value="UniProtKB"/>
</dbReference>
<dbReference type="GO" id="GO:0070498">
    <property type="term" value="P:interleukin-1-mediated signaling pathway"/>
    <property type="evidence" value="ECO:0000315"/>
    <property type="project" value="BHF-UCL"/>
</dbReference>
<dbReference type="GO" id="GO:0045475">
    <property type="term" value="P:locomotor rhythm"/>
    <property type="evidence" value="ECO:0000250"/>
    <property type="project" value="UniProtKB"/>
</dbReference>
<dbReference type="GO" id="GO:0090090">
    <property type="term" value="P:negative regulation of canonical Wnt signaling pathway"/>
    <property type="evidence" value="ECO:0007669"/>
    <property type="project" value="Ensembl"/>
</dbReference>
<dbReference type="GO" id="GO:0000122">
    <property type="term" value="P:negative regulation of transcription by RNA polymerase II"/>
    <property type="evidence" value="ECO:0007669"/>
    <property type="project" value="Ensembl"/>
</dbReference>
<dbReference type="GO" id="GO:0032722">
    <property type="term" value="P:positive regulation of chemokine production"/>
    <property type="evidence" value="ECO:0000250"/>
    <property type="project" value="UniProtKB"/>
</dbReference>
<dbReference type="GO" id="GO:0045893">
    <property type="term" value="P:positive regulation of DNA-templated transcription"/>
    <property type="evidence" value="ECO:0000314"/>
    <property type="project" value="UniProtKB"/>
</dbReference>
<dbReference type="GO" id="GO:0010628">
    <property type="term" value="P:positive regulation of gene expression"/>
    <property type="evidence" value="ECO:0000315"/>
    <property type="project" value="BHF-UCL"/>
</dbReference>
<dbReference type="GO" id="GO:0044029">
    <property type="term" value="P:positive regulation of gene expression via chromosomal CpG island demethylation"/>
    <property type="evidence" value="ECO:0000250"/>
    <property type="project" value="ARUK-UCL"/>
</dbReference>
<dbReference type="GO" id="GO:0072303">
    <property type="term" value="P:positive regulation of glomerular metanephric mesangial cell proliferation"/>
    <property type="evidence" value="ECO:0000250"/>
    <property type="project" value="UniProtKB"/>
</dbReference>
<dbReference type="GO" id="GO:0046886">
    <property type="term" value="P:positive regulation of hormone biosynthetic process"/>
    <property type="evidence" value="ECO:0000250"/>
    <property type="project" value="UniProtKB"/>
</dbReference>
<dbReference type="GO" id="GO:0032731">
    <property type="term" value="P:positive regulation of interleukin-1 beta production"/>
    <property type="evidence" value="ECO:0000250"/>
    <property type="project" value="UniProtKB"/>
</dbReference>
<dbReference type="GO" id="GO:1902895">
    <property type="term" value="P:positive regulation of miRNA transcription"/>
    <property type="evidence" value="ECO:0000314"/>
    <property type="project" value="ARUK-UCL"/>
</dbReference>
<dbReference type="GO" id="GO:1901875">
    <property type="term" value="P:positive regulation of post-translational protein modification"/>
    <property type="evidence" value="ECO:0000315"/>
    <property type="project" value="BHF-UCL"/>
</dbReference>
<dbReference type="GO" id="GO:0045944">
    <property type="term" value="P:positive regulation of transcription by RNA polymerase II"/>
    <property type="evidence" value="ECO:0000314"/>
    <property type="project" value="UniProtKB"/>
</dbReference>
<dbReference type="GO" id="GO:0043523">
    <property type="term" value="P:regulation of neuron apoptotic process"/>
    <property type="evidence" value="ECO:0000250"/>
    <property type="project" value="ARUK-UCL"/>
</dbReference>
<dbReference type="GO" id="GO:2000182">
    <property type="term" value="P:regulation of progesterone biosynthetic process"/>
    <property type="evidence" value="ECO:0000250"/>
    <property type="project" value="UniProtKB"/>
</dbReference>
<dbReference type="GO" id="GO:0033233">
    <property type="term" value="P:regulation of protein sumoylation"/>
    <property type="evidence" value="ECO:0000314"/>
    <property type="project" value="BHF-UCL"/>
</dbReference>
<dbReference type="GO" id="GO:0006357">
    <property type="term" value="P:regulation of transcription by RNA polymerase II"/>
    <property type="evidence" value="ECO:0000318"/>
    <property type="project" value="GO_Central"/>
</dbReference>
<dbReference type="GO" id="GO:0009749">
    <property type="term" value="P:response to glucose"/>
    <property type="evidence" value="ECO:0007669"/>
    <property type="project" value="Ensembl"/>
</dbReference>
<dbReference type="GO" id="GO:0001666">
    <property type="term" value="P:response to hypoxia"/>
    <property type="evidence" value="ECO:0000250"/>
    <property type="project" value="UniProtKB"/>
</dbReference>
<dbReference type="GO" id="GO:0032868">
    <property type="term" value="P:response to insulin"/>
    <property type="evidence" value="ECO:0007669"/>
    <property type="project" value="Ensembl"/>
</dbReference>
<dbReference type="GO" id="GO:0002931">
    <property type="term" value="P:response to ischemia"/>
    <property type="evidence" value="ECO:0000250"/>
    <property type="project" value="UniProtKB"/>
</dbReference>
<dbReference type="GO" id="GO:0035914">
    <property type="term" value="P:skeletal muscle cell differentiation"/>
    <property type="evidence" value="ECO:0007669"/>
    <property type="project" value="Ensembl"/>
</dbReference>
<dbReference type="GO" id="GO:0030217">
    <property type="term" value="P:T cell differentiation"/>
    <property type="evidence" value="ECO:0007669"/>
    <property type="project" value="Ensembl"/>
</dbReference>
<dbReference type="FunFam" id="3.30.160.60:FF:000769">
    <property type="entry name" value="Early growth response 2b"/>
    <property type="match status" value="1"/>
</dbReference>
<dbReference type="FunFam" id="3.30.160.60:FF:000324">
    <property type="entry name" value="Early growth response protein 4"/>
    <property type="match status" value="1"/>
</dbReference>
<dbReference type="FunFam" id="3.30.160.60:FF:000419">
    <property type="entry name" value="Early growth response protein 4"/>
    <property type="match status" value="1"/>
</dbReference>
<dbReference type="Gene3D" id="3.30.160.60">
    <property type="entry name" value="Classic Zinc Finger"/>
    <property type="match status" value="3"/>
</dbReference>
<dbReference type="InterPro" id="IPR021839">
    <property type="entry name" value="EGR1_C"/>
</dbReference>
<dbReference type="InterPro" id="IPR021849">
    <property type="entry name" value="EGR_N"/>
</dbReference>
<dbReference type="InterPro" id="IPR036236">
    <property type="entry name" value="Znf_C2H2_sf"/>
</dbReference>
<dbReference type="InterPro" id="IPR013087">
    <property type="entry name" value="Znf_C2H2_type"/>
</dbReference>
<dbReference type="PANTHER" id="PTHR24399:SF23">
    <property type="entry name" value="C2H2-TYPE DOMAIN-CONTAINING PROTEIN"/>
    <property type="match status" value="1"/>
</dbReference>
<dbReference type="PANTHER" id="PTHR24399">
    <property type="entry name" value="ZINC FINGER AND BTB DOMAIN-CONTAINING"/>
    <property type="match status" value="1"/>
</dbReference>
<dbReference type="Pfam" id="PF11914">
    <property type="entry name" value="DUF3432"/>
    <property type="match status" value="2"/>
</dbReference>
<dbReference type="Pfam" id="PF11928">
    <property type="entry name" value="DUF3446"/>
    <property type="match status" value="1"/>
</dbReference>
<dbReference type="Pfam" id="PF00096">
    <property type="entry name" value="zf-C2H2"/>
    <property type="match status" value="3"/>
</dbReference>
<dbReference type="SMART" id="SM00355">
    <property type="entry name" value="ZnF_C2H2"/>
    <property type="match status" value="3"/>
</dbReference>
<dbReference type="SUPFAM" id="SSF57667">
    <property type="entry name" value="beta-beta-alpha zinc fingers"/>
    <property type="match status" value="2"/>
</dbReference>
<dbReference type="PROSITE" id="PS00028">
    <property type="entry name" value="ZINC_FINGER_C2H2_1"/>
    <property type="match status" value="3"/>
</dbReference>
<dbReference type="PROSITE" id="PS50157">
    <property type="entry name" value="ZINC_FINGER_C2H2_2"/>
    <property type="match status" value="3"/>
</dbReference>
<evidence type="ECO:0000250" key="1">
    <source>
        <dbReference type="UniProtKB" id="P08046"/>
    </source>
</evidence>
<evidence type="ECO:0000255" key="2">
    <source>
        <dbReference type="PROSITE-ProRule" id="PRU00042"/>
    </source>
</evidence>
<evidence type="ECO:0000256" key="3">
    <source>
        <dbReference type="SAM" id="MobiDB-lite"/>
    </source>
</evidence>
<evidence type="ECO:0000269" key="4">
    <source>
    </source>
</evidence>
<evidence type="ECO:0000269" key="5">
    <source>
    </source>
</evidence>
<evidence type="ECO:0000269" key="6">
    <source>
    </source>
</evidence>
<evidence type="ECO:0000269" key="7">
    <source>
    </source>
</evidence>
<evidence type="ECO:0000303" key="8">
    <source>
    </source>
</evidence>
<evidence type="ECO:0000303" key="9">
    <source>
    </source>
</evidence>
<evidence type="ECO:0000305" key="10"/>
<evidence type="ECO:0007744" key="11">
    <source>
        <dbReference type="PDB" id="4R2A"/>
    </source>
</evidence>
<evidence type="ECO:0007744" key="12">
    <source>
        <dbReference type="PDB" id="4R2C"/>
    </source>
</evidence>
<evidence type="ECO:0007744" key="13">
    <source>
        <dbReference type="PDB" id="4R2D"/>
    </source>
</evidence>
<evidence type="ECO:0007744" key="14">
    <source>
        <dbReference type="PDB" id="4X9J"/>
    </source>
</evidence>
<evidence type="ECO:0007744" key="15">
    <source>
    </source>
</evidence>
<evidence type="ECO:0007829" key="16">
    <source>
        <dbReference type="PDB" id="4X9J"/>
    </source>
</evidence>
<comment type="function">
    <text evidence="1 4 6 7">Transcriptional regulator (PubMed:20121949). Recognizes and binds to the DNA sequence 5'-GCG(T/G)GGGCG-3'(EGR-site) in the promoter region of target genes (By similarity). Binds double-stranded target DNA, irrespective of the cytosine methylation status (PubMed:25258363, PubMed:25999311). Regulates the transcription of numerous target genes, and thereby plays an important role in regulating the response to growth factors, DNA damage, and ischemia. Plays a role in the regulation of cell survival, proliferation and cell death. Activates expression of p53/TP53 and TGFB1, and thereby helps prevent tumor formation. Required for normal progress through mitosis and normal proliferation of hepatocytes after partial hepatectomy. Mediates responses to ischemia and hypoxia; regulates the expression of proteins such as IL1B and CXCL2 that are involved in inflammatory processes and development of tissue damage after ischemia. Regulates biosynthesis of luteinizing hormone (LHB) in the pituitary (By similarity). Regulates the amplitude of the expression rhythms of clock genes: BMAL1, PER2 and NR1D1 in the liver via the activation of PER1 (clock repressor) transcription. Regulates the rhythmic expression of core-clock gene BMAL1 in the suprachiasmatic nucleus (SCN) (By similarity).</text>
</comment>
<comment type="subunit">
    <text evidence="4">Interacts with SNAI1 and SP1 upon 12-O-tetradecanoylphorbol-13-acetate (TPA) induction.</text>
</comment>
<comment type="interaction">
    <interactant intactId="EBI-2834611">
        <id>P18146</id>
    </interactant>
    <interactant intactId="EBI-625922">
        <id>Q8N726</id>
        <label>CDKN2A</label>
    </interactant>
    <organismsDiffer>false</organismsDiffer>
    <experiments>4</experiments>
</comment>
<comment type="interaction">
    <interactant intactId="EBI-2834611">
        <id>P18146</id>
    </interactant>
    <interactant intactId="EBI-491549">
        <id>P35222</id>
        <label>CTNNB1</label>
    </interactant>
    <organismsDiffer>false</organismsDiffer>
    <experiments>7</experiments>
</comment>
<comment type="subcellular location">
    <subcellularLocation>
        <location evidence="5">Nucleus</location>
    </subcellularLocation>
    <subcellularLocation>
        <location evidence="5">Cytoplasm</location>
    </subcellularLocation>
</comment>
<comment type="tissue specificity">
    <text evidence="5">Detected in neutrophils (at protein level).</text>
</comment>
<comment type="induction">
    <text evidence="5">By growth factors.</text>
</comment>
<comment type="domain">
    <text evidence="6 7">Binds to DNA motifs with the sequence 5'-GCG(T/G)GGGCG-3' via its C2H2-type zinc fingers (PubMed:25258363, PubMed:25999311). The first, most N-terminal zinc finger binds to the 3'-GCG motif, the middle zinc finger interacts with the central TGG motif, and the C-terminal zinc finger binds to the 5'-GCG motif. Binds double-stranded target DNA, irrespective of the cytosine methylation status. Has reduced affinity for target DNA where the cytosines have been oxidized to 5-hydroxymethylcytosine. Does not bind target DNA where the cytosines have been oxidized to 5-formylcytosine or 5-carboxylcytosine (PubMed:25258363).</text>
</comment>
<comment type="similarity">
    <text evidence="10">Belongs to the EGR C2H2-type zinc-finger protein family.</text>
</comment>
<comment type="online information" name="Atlas of Genetics and Cytogenetics in Oncology and Haematology">
    <link uri="https://atlasgeneticsoncology.org/gene/496/EGR1"/>
</comment>
<organism>
    <name type="scientific">Homo sapiens</name>
    <name type="common">Human</name>
    <dbReference type="NCBI Taxonomy" id="9606"/>
    <lineage>
        <taxon>Eukaryota</taxon>
        <taxon>Metazoa</taxon>
        <taxon>Chordata</taxon>
        <taxon>Craniata</taxon>
        <taxon>Vertebrata</taxon>
        <taxon>Euteleostomi</taxon>
        <taxon>Mammalia</taxon>
        <taxon>Eutheria</taxon>
        <taxon>Euarchontoglires</taxon>
        <taxon>Primates</taxon>
        <taxon>Haplorrhini</taxon>
        <taxon>Catarrhini</taxon>
        <taxon>Hominidae</taxon>
        <taxon>Homo</taxon>
    </lineage>
</organism>
<protein>
    <recommendedName>
        <fullName evidence="9">Early growth response protein 1</fullName>
        <shortName evidence="9">EGR-1</shortName>
    </recommendedName>
    <alternativeName>
        <fullName>AT225</fullName>
    </alternativeName>
    <alternativeName>
        <fullName>Nerve growth factor-induced protein A</fullName>
        <shortName>NGFI-A</shortName>
    </alternativeName>
    <alternativeName>
        <fullName>Transcription factor ETR103</fullName>
    </alternativeName>
    <alternativeName>
        <fullName>Transcription factor Zif268</fullName>
    </alternativeName>
    <alternativeName>
        <fullName evidence="8">Zinc finger protein 225</fullName>
    </alternativeName>
    <alternativeName>
        <fullName>Zinc finger protein Krox-24</fullName>
    </alternativeName>
</protein>
<reference key="1">
    <citation type="journal article" date="1990" name="Nucleic Acids Res.">
        <title>cDNA sequence of the human cellular early growth response gene Egr-1.</title>
        <authorList>
            <person name="Suggs S.V."/>
            <person name="Katzowitz J.L."/>
            <person name="Tsai-Morris C.-H."/>
            <person name="Sukhatme V.P."/>
        </authorList>
    </citation>
    <scope>NUCLEOTIDE SEQUENCE [MRNA]</scope>
    <source>
        <tissue>Foreskin</tissue>
    </source>
</reference>
<reference key="2">
    <citation type="journal article" date="1992" name="J. Biochem.">
        <title>A gene coding for a zinc finger protein is induced during 12-O-tetradecanoylphorbol-13-acetate-stimulated HL-60 cell differentiation.</title>
        <authorList>
            <person name="Shimizu N."/>
            <person name="Ohta M."/>
            <person name="Fujiwara C."/>
            <person name="Sagara J."/>
            <person name="Mochizuki N."/>
            <person name="Oda T."/>
            <person name="Utiyama H."/>
        </authorList>
    </citation>
    <scope>NUCLEOTIDE SEQUENCE [MRNA]</scope>
</reference>
<reference key="3">
    <citation type="journal article" date="1990" name="Science">
        <title>Expression of a zinc finger gene in HTLV-I- and HTLV-II-transformed cells.</title>
        <authorList>
            <person name="Wright J.J."/>
            <person name="Gunter K.C."/>
            <person name="Mitsuya H."/>
            <person name="Irving S.G."/>
            <person name="Kelly K."/>
            <person name="Siebenlist U."/>
        </authorList>
    </citation>
    <scope>NUCLEOTIDE SEQUENCE [MRNA]</scope>
</reference>
<reference key="4">
    <citation type="journal article" date="2004" name="Genome Res.">
        <title>The status, quality, and expansion of the NIH full-length cDNA project: the Mammalian Gene Collection (MGC).</title>
        <authorList>
            <consortium name="The MGC Project Team"/>
        </authorList>
    </citation>
    <scope>NUCLEOTIDE SEQUENCE [LARGE SCALE MRNA]</scope>
    <source>
        <tissue>PNS</tissue>
    </source>
</reference>
<reference key="5">
    <citation type="journal article" date="2009" name="Sci. Signal.">
        <title>Quantitative phosphoproteomic analysis of T cell receptor signaling reveals system-wide modulation of protein-protein interactions.</title>
        <authorList>
            <person name="Mayya V."/>
            <person name="Lundgren D.H."/>
            <person name="Hwang S.-I."/>
            <person name="Rezaul K."/>
            <person name="Wu L."/>
            <person name="Eng J.K."/>
            <person name="Rodionov V."/>
            <person name="Han D.K."/>
        </authorList>
    </citation>
    <scope>IDENTIFICATION BY MASS SPECTROMETRY [LARGE SCALE ANALYSIS]</scope>
    <source>
        <tissue>Leukemic T-cell</tissue>
    </source>
</reference>
<reference key="6">
    <citation type="journal article" date="2010" name="FEBS J.">
        <title>Snail associates with EGR-1 and SP-1 to upregulate transcriptional activation of p15INK4b.</title>
        <authorList>
            <person name="Hu C.T."/>
            <person name="Chang T.Y."/>
            <person name="Cheng C.C."/>
            <person name="Liu C.S."/>
            <person name="Wu J.R."/>
            <person name="Li M.C."/>
            <person name="Wu W.S."/>
        </authorList>
    </citation>
    <scope>INTERACTION WITH SNAI1 AND SP1</scope>
    <scope>FUNCTION</scope>
</reference>
<reference key="7">
    <citation type="journal article" date="2010" name="Mol. Immunol.">
        <title>Mature human neutrophils constitutively express the transcription factor EGR-1.</title>
        <authorList>
            <person name="Cullen E.M."/>
            <person name="Brazil J.C."/>
            <person name="O'Connor C.M."/>
        </authorList>
    </citation>
    <scope>SUBCELLULAR LOCATION</scope>
    <scope>INDUCTION BY GROWTH FACTORS</scope>
</reference>
<reference key="8">
    <citation type="journal article" date="2017" name="Nat. Struct. Mol. Biol.">
        <title>Site-specific mapping of the human SUMO proteome reveals co-modification with phosphorylation.</title>
        <authorList>
            <person name="Hendriks I.A."/>
            <person name="Lyon D."/>
            <person name="Young C."/>
            <person name="Jensen L.J."/>
            <person name="Vertegaal A.C."/>
            <person name="Nielsen M.L."/>
        </authorList>
    </citation>
    <scope>SUMOYLATION [LARGE SCALE ANALYSIS] AT LYS-305</scope>
    <scope>IDENTIFICATION BY MASS SPECTROMETRY [LARGE SCALE ANALYSIS]</scope>
</reference>
<reference evidence="11 12 13" key="9">
    <citation type="journal article" date="2014" name="Genes Dev.">
        <title>Wilms tumor protein recognizes 5-carboxylcytosine within a specific DNA sequence.</title>
        <authorList>
            <person name="Hashimoto H."/>
            <person name="Olanrewaju Y.O."/>
            <person name="Zheng Y."/>
            <person name="Wilson G.G."/>
            <person name="Zhang X."/>
            <person name="Cheng X."/>
        </authorList>
    </citation>
    <scope>X-RAY CRYSTALLOGRAPHY (1.59 ANGSTROMS) OF 335-423 IN COMPLEX WITH ZINC AND TARGET DNA</scope>
    <scope>FUNCTION</scope>
    <scope>DOMAIN</scope>
    <scope>SITES OF INTERACTION WITH DNA</scope>
</reference>
<reference evidence="14" key="10">
    <citation type="journal article" date="2015" name="FEBS Lett.">
        <title>Structural impact of complete CpG methylation within target DNA on specific complex formation of the inducible transcription factor Egr-1.</title>
        <authorList>
            <person name="Zandarashvili L."/>
            <person name="White M.A."/>
            <person name="Esadze A."/>
            <person name="Iwahara J."/>
        </authorList>
    </citation>
    <scope>X-RAY CRYSTALLOGRAPHY (1.41 ANGSTROMS) OF 335-423 IN COMPLEX WITH ZINC AND TARGET DNA</scope>
    <scope>FUNCTION</scope>
    <scope>DOMAIN</scope>
    <scope>SITES OF INTERACTION WITH DNA</scope>
</reference>
<gene>
    <name type="primary">EGR1</name>
    <name type="synonym">KROX24</name>
    <name evidence="8" type="synonym">ZNF225</name>
</gene>
<accession>P18146</accession>
<sequence>MAAAKAEMQLMSPLQISDPFGSFPHSPTMDNYPKLEEMMLLSNGAPQFLGAAGAPEGSGSNSSSSSSGGGGGGGGGSNSSSSSSTFNPQADTGEQPYEHLTAESFPDISLNNEKVLVETSYPSQTTRLPPITYTGRFSLEPAPNSGNTLWPEPLFSLVSGLVSMTNPPASSSSAPSPAASSASASQSPPLSCAVPSNDSSPIYSAAPTFPTPNTDIFPEPQSQAFPGSAGTALQYPPPAYPAAKGGFQVPMIPDYLFPQQQGDLGLGTPDQKPFQGLESRTQQPSLTPLSTIKAFATQSGSQDLKALNTSYQSQLIKPSRMRKYPNRPSKTPPHERPYACPVESCDRRFSRSDELTRHIRIHTGQKPFQCRICMRNFSRSDHLTTHIRTHTGEKPFACDICGRKFARSDERKRHTKIHLRQKDKKADKSVVASSATSSLSSYPSPVATSYPSPVTTSYPSPATTSYPSPVPTSFSSPGSSTYPSPVHSGFPSPSVATTYSSVPPAFPAQVSSFPSSAVTNSFSASTGLSDMTATFSPRTIEIC</sequence>
<keyword id="KW-0002">3D-structure</keyword>
<keyword id="KW-0010">Activator</keyword>
<keyword id="KW-0090">Biological rhythms</keyword>
<keyword id="KW-0963">Cytoplasm</keyword>
<keyword id="KW-0238">DNA-binding</keyword>
<keyword id="KW-1017">Isopeptide bond</keyword>
<keyword id="KW-0479">Metal-binding</keyword>
<keyword id="KW-0539">Nucleus</keyword>
<keyword id="KW-1267">Proteomics identification</keyword>
<keyword id="KW-1185">Reference proteome</keyword>
<keyword id="KW-0677">Repeat</keyword>
<keyword id="KW-0804">Transcription</keyword>
<keyword id="KW-0805">Transcription regulation</keyword>
<keyword id="KW-0832">Ubl conjugation</keyword>
<keyword id="KW-0862">Zinc</keyword>
<keyword id="KW-0863">Zinc-finger</keyword>
<proteinExistence type="evidence at protein level"/>
<name>EGR1_HUMAN</name>